<sequence>MASKDFHIVAETGIHARPATLLVQTASKFASDITLDYKGKAVNLKSIMGVMSLGVGQGADVTISAEGADADDAIVAIAETMTKEGLA</sequence>
<keyword id="KW-0963">Cytoplasm</keyword>
<keyword id="KW-0903">Direct protein sequencing</keyword>
<keyword id="KW-0597">Phosphoprotein</keyword>
<keyword id="KW-0598">Phosphotransferase system</keyword>
<keyword id="KW-0762">Sugar transport</keyword>
<keyword id="KW-0804">Transcription</keyword>
<keyword id="KW-0805">Transcription regulation</keyword>
<keyword id="KW-0813">Transport</keyword>
<protein>
    <recommendedName>
        <fullName>Phosphocarrier protein HPr</fullName>
    </recommendedName>
    <alternativeName>
        <fullName>Histidine-containing protein</fullName>
    </alternativeName>
</protein>
<gene>
    <name type="primary">ptsH</name>
</gene>
<evidence type="ECO:0000250" key="1"/>
<evidence type="ECO:0000255" key="2">
    <source>
        <dbReference type="PROSITE-ProRule" id="PRU00681"/>
    </source>
</evidence>
<evidence type="ECO:0000269" key="3">
    <source>
    </source>
</evidence>
<evidence type="ECO:0000305" key="4"/>
<comment type="function">
    <text>General (non sugar-specific) component of the phosphoenolpyruvate-dependent sugar phosphotransferase system (sugar PTS). This major carbohydrate active-transport system catalyzes the phosphorylation of incoming sugar substrates concomitantly with their translocation across the cell membrane. The phosphoryl group from phosphoenolpyruvate (PEP) is transferred to the phosphoryl carrier protein HPr by enzyme I. Phospho-HPr then transfers it to the PTS EIIA domain.</text>
</comment>
<comment type="function">
    <text evidence="1">P-Ser-HPr interacts with the catabolite control protein A (CcpA), forming a complex that binds to DNA at the catabolite response elements cre, operator sites preceding a large number of catabolite-regulated genes. Thus, P-Ser-HPr is a corepressor in carbon catabolite repression (CCR), a mechanism that allows bacteria to coordinate and optimize the utilization of available carbon sources. P-Ser-HPr also plays a role in inducer exclusion, in which it probably interacts with several non-PTS permeases and inhibits their transport activity (By similarity).</text>
</comment>
<comment type="activity regulation">
    <text>Phosphorylation on Ser-46 inhibits the phosphoryl transfer from enzyme I to HPr.</text>
</comment>
<comment type="subcellular location">
    <subcellularLocation>
        <location>Cytoplasm</location>
    </subcellularLocation>
</comment>
<comment type="similarity">
    <text evidence="4">Belongs to the HPr family.</text>
</comment>
<feature type="chain" id="PRO_0000107885" description="Phosphocarrier protein HPr">
    <location>
        <begin position="1"/>
        <end position="87"/>
    </location>
</feature>
<feature type="domain" description="HPr" evidence="2">
    <location>
        <begin position="1"/>
        <end position="87"/>
    </location>
</feature>
<feature type="active site" description="Pros-phosphohistidine intermediate" evidence="2">
    <location>
        <position position="15"/>
    </location>
</feature>
<feature type="modified residue" description="Phosphoserine; by HPrK/P" evidence="2 3">
    <location>
        <position position="46"/>
    </location>
</feature>
<feature type="sequence variant" description="In some of the molecules.">
    <location>
        <position position="1"/>
    </location>
</feature>
<proteinExistence type="evidence at protein level"/>
<name>PTHP_STRSL</name>
<reference key="1">
    <citation type="journal article" date="1993" name="Gene">
        <title>Phosphotransferase system of Streptococcus salivarius: characterization of the ptsH gene and its product.</title>
        <authorList>
            <person name="Gagnon G."/>
            <person name="Vadeboncoeur C."/>
            <person name="Frenette M."/>
        </authorList>
    </citation>
    <scope>NUCLEOTIDE SEQUENCE [GENOMIC DNA]</scope>
    <source>
        <strain>ATCC 25975</strain>
    </source>
</reference>
<reference key="2">
    <citation type="journal article" date="1991" name="Biochimie">
        <title>HPr polymorphism in oral streptococci is caused by the partial removal of the N-terminal methionine.</title>
        <authorList>
            <person name="Vadeboncoeur C."/>
            <person name="Konishi Y."/>
            <person name="Dumas F."/>
            <person name="Gauthier L."/>
            <person name="Frenette M."/>
        </authorList>
    </citation>
    <scope>PROTEIN SEQUENCE OF 1-20</scope>
</reference>
<reference key="3">
    <citation type="journal article" date="1992" name="Gene">
        <title>Cloning, sequencing and expression in Escherichia coli of the ptsI gene encoding enzyme I of the phosphoenolpyruvate:sugar phosphotransferase transport system from Streptococcus salivarius.</title>
        <authorList>
            <person name="Gagnon G."/>
            <person name="Vadeboncoeur C."/>
            <person name="Levesque R.C."/>
            <person name="Frenette M."/>
        </authorList>
    </citation>
    <scope>NUCLEOTIDE SEQUENCE [GENOMIC DNA] OF 65-87</scope>
</reference>
<reference key="4">
    <citation type="journal article" date="1999" name="J. Bacteriol.">
        <title>The HPr(Ser) kinase of Streptococcus salivarius: purification, properties, and cloning of the hprK gene.</title>
        <authorList>
            <person name="Brochu D."/>
            <person name="Vadeboncoeur C."/>
        </authorList>
    </citation>
    <scope>PHOSPHORYLATION AT SER-46</scope>
    <source>
        <strain>ATCC 25975</strain>
    </source>
</reference>
<organism>
    <name type="scientific">Streptococcus salivarius</name>
    <dbReference type="NCBI Taxonomy" id="1304"/>
    <lineage>
        <taxon>Bacteria</taxon>
        <taxon>Bacillati</taxon>
        <taxon>Bacillota</taxon>
        <taxon>Bacilli</taxon>
        <taxon>Lactobacillales</taxon>
        <taxon>Streptococcaceae</taxon>
        <taxon>Streptococcus</taxon>
    </lineage>
</organism>
<accession>P24366</accession>
<dbReference type="EMBL" id="Z17217">
    <property type="protein sequence ID" value="CAA78923.1"/>
    <property type="molecule type" value="Genomic_DNA"/>
</dbReference>
<dbReference type="EMBL" id="M81756">
    <property type="status" value="NOT_ANNOTATED_CDS"/>
    <property type="molecule type" value="Genomic_DNA"/>
</dbReference>
<dbReference type="PIR" id="A48400">
    <property type="entry name" value="A48400"/>
</dbReference>
<dbReference type="PIR" id="B48400">
    <property type="entry name" value="B48400"/>
</dbReference>
<dbReference type="PIR" id="S37585">
    <property type="entry name" value="S37585"/>
</dbReference>
<dbReference type="RefSeq" id="WP_045772118.1">
    <property type="nucleotide sequence ID" value="NZ_WMYH01000035.1"/>
</dbReference>
<dbReference type="SMR" id="P24366"/>
<dbReference type="STRING" id="1304.HMPREF3219_0201232"/>
<dbReference type="iPTMnet" id="P24366"/>
<dbReference type="SABIO-RK" id="P24366"/>
<dbReference type="GO" id="GO:0005737">
    <property type="term" value="C:cytoplasm"/>
    <property type="evidence" value="ECO:0007669"/>
    <property type="project" value="UniProtKB-SubCell"/>
</dbReference>
<dbReference type="GO" id="GO:0009401">
    <property type="term" value="P:phosphoenolpyruvate-dependent sugar phosphotransferase system"/>
    <property type="evidence" value="ECO:0007669"/>
    <property type="project" value="UniProtKB-KW"/>
</dbReference>
<dbReference type="CDD" id="cd00367">
    <property type="entry name" value="PTS-HPr_like"/>
    <property type="match status" value="1"/>
</dbReference>
<dbReference type="Gene3D" id="3.30.1340.10">
    <property type="entry name" value="HPr-like"/>
    <property type="match status" value="1"/>
</dbReference>
<dbReference type="InterPro" id="IPR050399">
    <property type="entry name" value="HPr"/>
</dbReference>
<dbReference type="InterPro" id="IPR000032">
    <property type="entry name" value="HPr-like"/>
</dbReference>
<dbReference type="InterPro" id="IPR035895">
    <property type="entry name" value="HPr-like_sf"/>
</dbReference>
<dbReference type="InterPro" id="IPR001020">
    <property type="entry name" value="PTS_HPr_His_P_site"/>
</dbReference>
<dbReference type="InterPro" id="IPR002114">
    <property type="entry name" value="PTS_HPr_Ser_P_site"/>
</dbReference>
<dbReference type="NCBIfam" id="NF010352">
    <property type="entry name" value="PRK13780.1"/>
    <property type="match status" value="1"/>
</dbReference>
<dbReference type="NCBIfam" id="TIGR01003">
    <property type="entry name" value="PTS_HPr_family"/>
    <property type="match status" value="1"/>
</dbReference>
<dbReference type="PANTHER" id="PTHR33705">
    <property type="entry name" value="PHOSPHOCARRIER PROTEIN HPR"/>
    <property type="match status" value="1"/>
</dbReference>
<dbReference type="PANTHER" id="PTHR33705:SF2">
    <property type="entry name" value="PHOSPHOCARRIER PROTEIN NPR"/>
    <property type="match status" value="1"/>
</dbReference>
<dbReference type="Pfam" id="PF00381">
    <property type="entry name" value="PTS-HPr"/>
    <property type="match status" value="1"/>
</dbReference>
<dbReference type="PRINTS" id="PR00107">
    <property type="entry name" value="PHOSPHOCPHPR"/>
</dbReference>
<dbReference type="SUPFAM" id="SSF55594">
    <property type="entry name" value="HPr-like"/>
    <property type="match status" value="1"/>
</dbReference>
<dbReference type="PROSITE" id="PS51350">
    <property type="entry name" value="PTS_HPR_DOM"/>
    <property type="match status" value="1"/>
</dbReference>
<dbReference type="PROSITE" id="PS00369">
    <property type="entry name" value="PTS_HPR_HIS"/>
    <property type="match status" value="1"/>
</dbReference>
<dbReference type="PROSITE" id="PS00589">
    <property type="entry name" value="PTS_HPR_SER"/>
    <property type="match status" value="1"/>
</dbReference>